<protein>
    <recommendedName>
        <fullName evidence="1">Phosphomethylpyrimidine synthase</fullName>
        <ecNumber evidence="1">4.1.99.17</ecNumber>
    </recommendedName>
    <alternativeName>
        <fullName evidence="1">Hydroxymethylpyrimidine phosphate synthase</fullName>
        <shortName evidence="1">HMP-P synthase</shortName>
        <shortName evidence="1">HMP-phosphate synthase</shortName>
        <shortName evidence="1">HMPP synthase</shortName>
    </alternativeName>
    <alternativeName>
        <fullName evidence="1">Thiamine biosynthesis protein ThiC</fullName>
    </alternativeName>
</protein>
<gene>
    <name evidence="1" type="primary">thiC</name>
    <name type="ordered locus">Shew_2096</name>
</gene>
<feature type="chain" id="PRO_1000075446" description="Phosphomethylpyrimidine synthase">
    <location>
        <begin position="1"/>
        <end position="683"/>
    </location>
</feature>
<feature type="region of interest" description="Disordered" evidence="2">
    <location>
        <begin position="647"/>
        <end position="683"/>
    </location>
</feature>
<feature type="compositionally biased region" description="Low complexity" evidence="2">
    <location>
        <begin position="653"/>
        <end position="675"/>
    </location>
</feature>
<feature type="binding site" evidence="1">
    <location>
        <position position="235"/>
    </location>
    <ligand>
        <name>substrate</name>
    </ligand>
</feature>
<feature type="binding site" evidence="1">
    <location>
        <position position="264"/>
    </location>
    <ligand>
        <name>substrate</name>
    </ligand>
</feature>
<feature type="binding site" evidence="1">
    <location>
        <position position="293"/>
    </location>
    <ligand>
        <name>substrate</name>
    </ligand>
</feature>
<feature type="binding site" evidence="1">
    <location>
        <position position="329"/>
    </location>
    <ligand>
        <name>substrate</name>
    </ligand>
</feature>
<feature type="binding site" evidence="1">
    <location>
        <begin position="349"/>
        <end position="351"/>
    </location>
    <ligand>
        <name>substrate</name>
    </ligand>
</feature>
<feature type="binding site" evidence="1">
    <location>
        <begin position="390"/>
        <end position="393"/>
    </location>
    <ligand>
        <name>substrate</name>
    </ligand>
</feature>
<feature type="binding site" evidence="1">
    <location>
        <position position="429"/>
    </location>
    <ligand>
        <name>substrate</name>
    </ligand>
</feature>
<feature type="binding site" evidence="1">
    <location>
        <position position="433"/>
    </location>
    <ligand>
        <name>Zn(2+)</name>
        <dbReference type="ChEBI" id="CHEBI:29105"/>
    </ligand>
</feature>
<feature type="binding site" evidence="1">
    <location>
        <position position="456"/>
    </location>
    <ligand>
        <name>substrate</name>
    </ligand>
</feature>
<feature type="binding site" evidence="1">
    <location>
        <position position="497"/>
    </location>
    <ligand>
        <name>Zn(2+)</name>
        <dbReference type="ChEBI" id="CHEBI:29105"/>
    </ligand>
</feature>
<feature type="binding site" evidence="1">
    <location>
        <position position="577"/>
    </location>
    <ligand>
        <name>[4Fe-4S] cluster</name>
        <dbReference type="ChEBI" id="CHEBI:49883"/>
        <note>4Fe-4S-S-AdoMet</note>
    </ligand>
</feature>
<feature type="binding site" evidence="1">
    <location>
        <position position="580"/>
    </location>
    <ligand>
        <name>[4Fe-4S] cluster</name>
        <dbReference type="ChEBI" id="CHEBI:49883"/>
        <note>4Fe-4S-S-AdoMet</note>
    </ligand>
</feature>
<feature type="binding site" evidence="1">
    <location>
        <position position="585"/>
    </location>
    <ligand>
        <name>[4Fe-4S] cluster</name>
        <dbReference type="ChEBI" id="CHEBI:49883"/>
        <note>4Fe-4S-S-AdoMet</note>
    </ligand>
</feature>
<keyword id="KW-0004">4Fe-4S</keyword>
<keyword id="KW-0408">Iron</keyword>
<keyword id="KW-0411">Iron-sulfur</keyword>
<keyword id="KW-0456">Lyase</keyword>
<keyword id="KW-0479">Metal-binding</keyword>
<keyword id="KW-1185">Reference proteome</keyword>
<keyword id="KW-0949">S-adenosyl-L-methionine</keyword>
<keyword id="KW-0784">Thiamine biosynthesis</keyword>
<keyword id="KW-0862">Zinc</keyword>
<organism>
    <name type="scientific">Shewanella loihica (strain ATCC BAA-1088 / PV-4)</name>
    <dbReference type="NCBI Taxonomy" id="323850"/>
    <lineage>
        <taxon>Bacteria</taxon>
        <taxon>Pseudomonadati</taxon>
        <taxon>Pseudomonadota</taxon>
        <taxon>Gammaproteobacteria</taxon>
        <taxon>Alteromonadales</taxon>
        <taxon>Shewanellaceae</taxon>
        <taxon>Shewanella</taxon>
    </lineage>
</organism>
<sequence length="683" mass="76178">MSTRREMRAEAQAFIDNLKPLQHPNSQKFYLNGSRPDLKVAMRQIYQSDTLIGGTAEAPVYEKNPPITVYDCAGPYSDPEADIDVRRGLVKLRSEWIAERSDTQELEQVSSGFTQQRLADEGLDHLRFEQLPKPRRALEGRVVTQMHYARRGIITPEMEYVALRENMARETVTEEVLNQRAPGESFGAKLGEPITPEFVRQELAAGRAILPLNINHPEAEPMIIGRNFLVKVNANIGNSAVTSSIEEEVEKLVWATRWGADTVMDLSTGRYIHETREWIIRNSPVPIGTVPIYQALEKVNGIAEDLTWEIFRDTLIEQAEQGVDYFTIHAGVLLRYVPMTAKRLTGIVSRGGSIMAKWCLSHHKENFLYEHFDEICQLCAAYDVSLSLGDGMRPGSIADANDEAQFAELETLGELVKKAWQYDVQTIIEGPGHIPMQLIKENMDKQLELCDEAPFYTLGPQTTDIAPGYDHFTSGIGAAMIAWYGCAMLCYVTPKEHLGLPNKEDVKQGLIAYKIAAHAGDVAKGHPGAQIRDNALSKARFEFRWEDQYNLGLDPDTARAYHDESLPQESAKVAHFCSMCGPKFCSMKITQEVREYAAAQATDVREIEVEQIDVTASAPKADIQQGMAQMSAQFKQSGSELYHSAIRQSPGVESTSLESTSLESTVLESTSLESTALEKAKEV</sequence>
<evidence type="ECO:0000255" key="1">
    <source>
        <dbReference type="HAMAP-Rule" id="MF_00089"/>
    </source>
</evidence>
<evidence type="ECO:0000256" key="2">
    <source>
        <dbReference type="SAM" id="MobiDB-lite"/>
    </source>
</evidence>
<comment type="function">
    <text evidence="1">Catalyzes the synthesis of the hydroxymethylpyrimidine phosphate (HMP-P) moiety of thiamine from aminoimidazole ribotide (AIR) in a radical S-adenosyl-L-methionine (SAM)-dependent reaction.</text>
</comment>
<comment type="catalytic activity">
    <reaction evidence="1">
        <text>5-amino-1-(5-phospho-beta-D-ribosyl)imidazole + S-adenosyl-L-methionine = 4-amino-2-methyl-5-(phosphooxymethyl)pyrimidine + CO + 5'-deoxyadenosine + formate + L-methionine + 3 H(+)</text>
        <dbReference type="Rhea" id="RHEA:24840"/>
        <dbReference type="ChEBI" id="CHEBI:15378"/>
        <dbReference type="ChEBI" id="CHEBI:15740"/>
        <dbReference type="ChEBI" id="CHEBI:17245"/>
        <dbReference type="ChEBI" id="CHEBI:17319"/>
        <dbReference type="ChEBI" id="CHEBI:57844"/>
        <dbReference type="ChEBI" id="CHEBI:58354"/>
        <dbReference type="ChEBI" id="CHEBI:59789"/>
        <dbReference type="ChEBI" id="CHEBI:137981"/>
        <dbReference type="EC" id="4.1.99.17"/>
    </reaction>
</comment>
<comment type="cofactor">
    <cofactor evidence="1">
        <name>[4Fe-4S] cluster</name>
        <dbReference type="ChEBI" id="CHEBI:49883"/>
    </cofactor>
    <text evidence="1">Binds 1 [4Fe-4S] cluster per subunit. The cluster is coordinated with 3 cysteines and an exchangeable S-adenosyl-L-methionine.</text>
</comment>
<comment type="pathway">
    <text evidence="1">Cofactor biosynthesis; thiamine diphosphate biosynthesis.</text>
</comment>
<comment type="subunit">
    <text evidence="1">Homodimer.</text>
</comment>
<comment type="similarity">
    <text evidence="1">Belongs to the ThiC family.</text>
</comment>
<reference key="1">
    <citation type="submission" date="2007-03" db="EMBL/GenBank/DDBJ databases">
        <title>Complete sequence of Shewanella loihica PV-4.</title>
        <authorList>
            <consortium name="US DOE Joint Genome Institute"/>
            <person name="Copeland A."/>
            <person name="Lucas S."/>
            <person name="Lapidus A."/>
            <person name="Barry K."/>
            <person name="Detter J.C."/>
            <person name="Glavina del Rio T."/>
            <person name="Hammon N."/>
            <person name="Israni S."/>
            <person name="Dalin E."/>
            <person name="Tice H."/>
            <person name="Pitluck S."/>
            <person name="Chain P."/>
            <person name="Malfatti S."/>
            <person name="Shin M."/>
            <person name="Vergez L."/>
            <person name="Schmutz J."/>
            <person name="Larimer F."/>
            <person name="Land M."/>
            <person name="Hauser L."/>
            <person name="Kyrpides N."/>
            <person name="Mikhailova N."/>
            <person name="Romine M.F."/>
            <person name="Serres G."/>
            <person name="Fredrickson J."/>
            <person name="Tiedje J."/>
            <person name="Richardson P."/>
        </authorList>
    </citation>
    <scope>NUCLEOTIDE SEQUENCE [LARGE SCALE GENOMIC DNA]</scope>
    <source>
        <strain>ATCC BAA-1088 / PV-4</strain>
    </source>
</reference>
<dbReference type="EC" id="4.1.99.17" evidence="1"/>
<dbReference type="EMBL" id="CP000606">
    <property type="protein sequence ID" value="ABO23962.1"/>
    <property type="molecule type" value="Genomic_DNA"/>
</dbReference>
<dbReference type="RefSeq" id="WP_011865894.1">
    <property type="nucleotide sequence ID" value="NC_009092.1"/>
</dbReference>
<dbReference type="SMR" id="A3QER4"/>
<dbReference type="STRING" id="323850.Shew_2096"/>
<dbReference type="KEGG" id="slo:Shew_2096"/>
<dbReference type="eggNOG" id="COG0422">
    <property type="taxonomic scope" value="Bacteria"/>
</dbReference>
<dbReference type="HOGENOM" id="CLU_013181_2_1_6"/>
<dbReference type="OrthoDB" id="9805897at2"/>
<dbReference type="UniPathway" id="UPA00060"/>
<dbReference type="Proteomes" id="UP000001558">
    <property type="component" value="Chromosome"/>
</dbReference>
<dbReference type="GO" id="GO:0005829">
    <property type="term" value="C:cytosol"/>
    <property type="evidence" value="ECO:0007669"/>
    <property type="project" value="TreeGrafter"/>
</dbReference>
<dbReference type="GO" id="GO:0051539">
    <property type="term" value="F:4 iron, 4 sulfur cluster binding"/>
    <property type="evidence" value="ECO:0007669"/>
    <property type="project" value="UniProtKB-KW"/>
</dbReference>
<dbReference type="GO" id="GO:0016830">
    <property type="term" value="F:carbon-carbon lyase activity"/>
    <property type="evidence" value="ECO:0007669"/>
    <property type="project" value="InterPro"/>
</dbReference>
<dbReference type="GO" id="GO:0008270">
    <property type="term" value="F:zinc ion binding"/>
    <property type="evidence" value="ECO:0007669"/>
    <property type="project" value="UniProtKB-UniRule"/>
</dbReference>
<dbReference type="GO" id="GO:0009228">
    <property type="term" value="P:thiamine biosynthetic process"/>
    <property type="evidence" value="ECO:0007669"/>
    <property type="project" value="UniProtKB-KW"/>
</dbReference>
<dbReference type="GO" id="GO:0009229">
    <property type="term" value="P:thiamine diphosphate biosynthetic process"/>
    <property type="evidence" value="ECO:0007669"/>
    <property type="project" value="UniProtKB-UniRule"/>
</dbReference>
<dbReference type="FunFam" id="3.20.20.540:FF:000001">
    <property type="entry name" value="Phosphomethylpyrimidine synthase"/>
    <property type="match status" value="1"/>
</dbReference>
<dbReference type="Gene3D" id="6.10.250.620">
    <property type="match status" value="1"/>
</dbReference>
<dbReference type="Gene3D" id="3.20.20.540">
    <property type="entry name" value="Radical SAM ThiC family, central domain"/>
    <property type="match status" value="1"/>
</dbReference>
<dbReference type="HAMAP" id="MF_00089">
    <property type="entry name" value="ThiC"/>
    <property type="match status" value="1"/>
</dbReference>
<dbReference type="InterPro" id="IPR037509">
    <property type="entry name" value="ThiC"/>
</dbReference>
<dbReference type="InterPro" id="IPR025747">
    <property type="entry name" value="ThiC-associated_dom"/>
</dbReference>
<dbReference type="InterPro" id="IPR038521">
    <property type="entry name" value="ThiC/Bza_core_dom"/>
</dbReference>
<dbReference type="InterPro" id="IPR002817">
    <property type="entry name" value="ThiC/BzaA/B"/>
</dbReference>
<dbReference type="NCBIfam" id="NF006763">
    <property type="entry name" value="PRK09284.1"/>
    <property type="match status" value="1"/>
</dbReference>
<dbReference type="NCBIfam" id="NF009895">
    <property type="entry name" value="PRK13352.1"/>
    <property type="match status" value="1"/>
</dbReference>
<dbReference type="NCBIfam" id="TIGR00190">
    <property type="entry name" value="thiC"/>
    <property type="match status" value="1"/>
</dbReference>
<dbReference type="PANTHER" id="PTHR30557:SF1">
    <property type="entry name" value="PHOSPHOMETHYLPYRIMIDINE SYNTHASE, CHLOROPLASTIC"/>
    <property type="match status" value="1"/>
</dbReference>
<dbReference type="PANTHER" id="PTHR30557">
    <property type="entry name" value="THIAMINE BIOSYNTHESIS PROTEIN THIC"/>
    <property type="match status" value="1"/>
</dbReference>
<dbReference type="Pfam" id="PF13667">
    <property type="entry name" value="ThiC-associated"/>
    <property type="match status" value="1"/>
</dbReference>
<dbReference type="Pfam" id="PF01964">
    <property type="entry name" value="ThiC_Rad_SAM"/>
    <property type="match status" value="1"/>
</dbReference>
<dbReference type="SFLD" id="SFLDF00407">
    <property type="entry name" value="phosphomethylpyrimidine_syntha"/>
    <property type="match status" value="1"/>
</dbReference>
<dbReference type="SFLD" id="SFLDG01114">
    <property type="entry name" value="phosphomethylpyrimidine_syntha"/>
    <property type="match status" value="1"/>
</dbReference>
<dbReference type="SFLD" id="SFLDS00113">
    <property type="entry name" value="Radical_SAM_Phosphomethylpyrim"/>
    <property type="match status" value="1"/>
</dbReference>
<name>THIC_SHELP</name>
<accession>A3QER4</accession>
<proteinExistence type="inferred from homology"/>